<reference key="1">
    <citation type="submission" date="2008-10" db="EMBL/GenBank/DDBJ databases">
        <title>Genome sequence of Clostridium botulinum A2 Kyoto.</title>
        <authorList>
            <person name="Shrivastava S."/>
            <person name="Brinkac L.M."/>
            <person name="Brown J.L."/>
            <person name="Bruce D."/>
            <person name="Detter C.C."/>
            <person name="Johnson E.A."/>
            <person name="Munk C.A."/>
            <person name="Smith L.A."/>
            <person name="Smith T.J."/>
            <person name="Sutton G."/>
            <person name="Brettin T.S."/>
        </authorList>
    </citation>
    <scope>NUCLEOTIDE SEQUENCE [LARGE SCALE GENOMIC DNA]</scope>
    <source>
        <strain>Kyoto / Type A2</strain>
    </source>
</reference>
<dbReference type="EMBL" id="CP001581">
    <property type="protein sequence ID" value="ACO86771.1"/>
    <property type="molecule type" value="Genomic_DNA"/>
</dbReference>
<dbReference type="RefSeq" id="WP_003360992.1">
    <property type="nucleotide sequence ID" value="NC_012563.1"/>
</dbReference>
<dbReference type="SMR" id="C1FJY8"/>
<dbReference type="KEGG" id="cby:CLM_1190"/>
<dbReference type="eggNOG" id="ENOG5032ZH6">
    <property type="taxonomic scope" value="Bacteria"/>
</dbReference>
<dbReference type="HOGENOM" id="CLU_178266_1_1_9"/>
<dbReference type="Proteomes" id="UP000001374">
    <property type="component" value="Chromosome"/>
</dbReference>
<dbReference type="HAMAP" id="MF_01506">
    <property type="entry name" value="Tlp"/>
    <property type="match status" value="1"/>
</dbReference>
<dbReference type="InterPro" id="IPR017524">
    <property type="entry name" value="SASP_thioredoxin-like"/>
</dbReference>
<dbReference type="NCBIfam" id="TIGR03090">
    <property type="entry name" value="SASP_tlp"/>
    <property type="match status" value="1"/>
</dbReference>
<dbReference type="Pfam" id="PF19824">
    <property type="entry name" value="Tlp"/>
    <property type="match status" value="1"/>
</dbReference>
<name>TLP_CLOBJ</name>
<organism>
    <name type="scientific">Clostridium botulinum (strain Kyoto / Type A2)</name>
    <dbReference type="NCBI Taxonomy" id="536232"/>
    <lineage>
        <taxon>Bacteria</taxon>
        <taxon>Bacillati</taxon>
        <taxon>Bacillota</taxon>
        <taxon>Clostridia</taxon>
        <taxon>Eubacteriales</taxon>
        <taxon>Clostridiaceae</taxon>
        <taxon>Clostridium</taxon>
    </lineage>
</organism>
<sequence length="75" mass="8975">MKNKPDDRRDNVDKIQYNITKTIQNCELADEMIAKTDDEKTKKTLIEKNQRRREALDGMREEIKDEARDKKNGYM</sequence>
<feature type="chain" id="PRO_1000185034" description="Protein Tlp homolog">
    <location>
        <begin position="1"/>
        <end position="75"/>
    </location>
</feature>
<feature type="region of interest" description="Disordered" evidence="2">
    <location>
        <begin position="48"/>
        <end position="75"/>
    </location>
</feature>
<accession>C1FJY8</accession>
<comment type="similarity">
    <text evidence="1">Belongs to the Tlp family.</text>
</comment>
<gene>
    <name evidence="1" type="primary">tlp</name>
    <name type="ordered locus">CLM_1190</name>
</gene>
<protein>
    <recommendedName>
        <fullName evidence="1">Protein Tlp homolog</fullName>
    </recommendedName>
</protein>
<proteinExistence type="inferred from homology"/>
<evidence type="ECO:0000255" key="1">
    <source>
        <dbReference type="HAMAP-Rule" id="MF_01506"/>
    </source>
</evidence>
<evidence type="ECO:0000256" key="2">
    <source>
        <dbReference type="SAM" id="MobiDB-lite"/>
    </source>
</evidence>